<name>YP096_YEAST</name>
<accession>O13587</accession>
<accession>D6W495</accession>
<sequence length="100" mass="11805">MRGETGVSIKNPRPSRPFSCFWRKGDVENIRKSDIGNEKKIDAKFNRLQYNLYYKPLSHHKAGLLYKELFFRSCFSYTTCSLDFQGKRHQVERKAVDIVL</sequence>
<feature type="chain" id="PRO_0000299823" description="Uncharacterized protein YPR096C">
    <location>
        <begin position="1"/>
        <end position="100"/>
    </location>
</feature>
<proteinExistence type="evidence at protein level"/>
<keyword id="KW-1185">Reference proteome</keyword>
<dbReference type="EMBL" id="U51033">
    <property type="protein sequence ID" value="AAB68148.1"/>
    <property type="molecule type" value="Genomic_DNA"/>
</dbReference>
<dbReference type="EMBL" id="BK006949">
    <property type="protein sequence ID" value="DAA11511.1"/>
    <property type="molecule type" value="Genomic_DNA"/>
</dbReference>
<dbReference type="PIR" id="S70048">
    <property type="entry name" value="S70048"/>
</dbReference>
<dbReference type="RefSeq" id="NP_015421.1">
    <property type="nucleotide sequence ID" value="NM_001184193.1"/>
</dbReference>
<dbReference type="BioGRID" id="300908">
    <property type="interactions" value="82"/>
</dbReference>
<dbReference type="DIP" id="DIP-4425N"/>
<dbReference type="FunCoup" id="O13587">
    <property type="interactions" value="18"/>
</dbReference>
<dbReference type="STRING" id="4932.YPR096C"/>
<dbReference type="iPTMnet" id="O13587"/>
<dbReference type="PaxDb" id="4932-YPR096C"/>
<dbReference type="EnsemblFungi" id="YPR096C_mRNA">
    <property type="protein sequence ID" value="YPR096C"/>
    <property type="gene ID" value="YPR096C"/>
</dbReference>
<dbReference type="GeneID" id="856211"/>
<dbReference type="KEGG" id="sce:YPR096C"/>
<dbReference type="AGR" id="SGD:S000006300"/>
<dbReference type="SGD" id="S000006300">
    <property type="gene designation" value="YPR096C"/>
</dbReference>
<dbReference type="VEuPathDB" id="FungiDB:YPR096C"/>
<dbReference type="HOGENOM" id="CLU_2307653_0_0_1"/>
<dbReference type="InParanoid" id="O13587"/>
<dbReference type="OrthoDB" id="10290640at2759"/>
<dbReference type="BioCyc" id="YEAST:G3O-34237-MONOMER"/>
<dbReference type="BioGRID-ORCS" id="856211">
    <property type="hits" value="1 hit in 10 CRISPR screens"/>
</dbReference>
<dbReference type="PRO" id="PR:O13587"/>
<dbReference type="Proteomes" id="UP000002311">
    <property type="component" value="Chromosome XVI"/>
</dbReference>
<dbReference type="RNAct" id="O13587">
    <property type="molecule type" value="protein"/>
</dbReference>
<dbReference type="GO" id="GO:0045727">
    <property type="term" value="P:positive regulation of translation"/>
    <property type="evidence" value="ECO:0000315"/>
    <property type="project" value="SGD"/>
</dbReference>
<comment type="subunit">
    <text>May interact with ribosomes.</text>
</comment>
<organism>
    <name type="scientific">Saccharomyces cerevisiae (strain ATCC 204508 / S288c)</name>
    <name type="common">Baker's yeast</name>
    <dbReference type="NCBI Taxonomy" id="559292"/>
    <lineage>
        <taxon>Eukaryota</taxon>
        <taxon>Fungi</taxon>
        <taxon>Dikarya</taxon>
        <taxon>Ascomycota</taxon>
        <taxon>Saccharomycotina</taxon>
        <taxon>Saccharomycetes</taxon>
        <taxon>Saccharomycetales</taxon>
        <taxon>Saccharomycetaceae</taxon>
        <taxon>Saccharomyces</taxon>
    </lineage>
</organism>
<protein>
    <recommendedName>
        <fullName>Uncharacterized protein YPR096C</fullName>
    </recommendedName>
</protein>
<reference key="1">
    <citation type="journal article" date="1997" name="Nature">
        <title>The nucleotide sequence of Saccharomyces cerevisiae chromosome XVI.</title>
        <authorList>
            <person name="Bussey H."/>
            <person name="Storms R.K."/>
            <person name="Ahmed A."/>
            <person name="Albermann K."/>
            <person name="Allen E."/>
            <person name="Ansorge W."/>
            <person name="Araujo R."/>
            <person name="Aparicio A."/>
            <person name="Barrell B.G."/>
            <person name="Badcock K."/>
            <person name="Benes V."/>
            <person name="Botstein D."/>
            <person name="Bowman S."/>
            <person name="Brueckner M."/>
            <person name="Carpenter J."/>
            <person name="Cherry J.M."/>
            <person name="Chung E."/>
            <person name="Churcher C.M."/>
            <person name="Coster F."/>
            <person name="Davis K."/>
            <person name="Davis R.W."/>
            <person name="Dietrich F.S."/>
            <person name="Delius H."/>
            <person name="DiPaolo T."/>
            <person name="Dubois E."/>
            <person name="Duesterhoeft A."/>
            <person name="Duncan M."/>
            <person name="Floeth M."/>
            <person name="Fortin N."/>
            <person name="Friesen J.D."/>
            <person name="Fritz C."/>
            <person name="Goffeau A."/>
            <person name="Hall J."/>
            <person name="Hebling U."/>
            <person name="Heumann K."/>
            <person name="Hilbert H."/>
            <person name="Hillier L.W."/>
            <person name="Hunicke-Smith S."/>
            <person name="Hyman R.W."/>
            <person name="Johnston M."/>
            <person name="Kalman S."/>
            <person name="Kleine K."/>
            <person name="Komp C."/>
            <person name="Kurdi O."/>
            <person name="Lashkari D."/>
            <person name="Lew H."/>
            <person name="Lin A."/>
            <person name="Lin D."/>
            <person name="Louis E.J."/>
            <person name="Marathe R."/>
            <person name="Messenguy F."/>
            <person name="Mewes H.-W."/>
            <person name="Mirtipati S."/>
            <person name="Moestl D."/>
            <person name="Mueller-Auer S."/>
            <person name="Namath A."/>
            <person name="Nentwich U."/>
            <person name="Oefner P."/>
            <person name="Pearson D."/>
            <person name="Petel F.X."/>
            <person name="Pohl T.M."/>
            <person name="Purnelle B."/>
            <person name="Rajandream M.A."/>
            <person name="Rechmann S."/>
            <person name="Rieger M."/>
            <person name="Riles L."/>
            <person name="Roberts D."/>
            <person name="Schaefer M."/>
            <person name="Scharfe M."/>
            <person name="Scherens B."/>
            <person name="Schramm S."/>
            <person name="Schroeder M."/>
            <person name="Sdicu A.-M."/>
            <person name="Tettelin H."/>
            <person name="Urrestarazu L.A."/>
            <person name="Ushinsky S."/>
            <person name="Vierendeels F."/>
            <person name="Vissers S."/>
            <person name="Voss H."/>
            <person name="Walsh S.V."/>
            <person name="Wambutt R."/>
            <person name="Wang Y."/>
            <person name="Wedler E."/>
            <person name="Wedler H."/>
            <person name="Winnett E."/>
            <person name="Zhong W.-W."/>
            <person name="Zollner A."/>
            <person name="Vo D.H."/>
            <person name="Hani J."/>
        </authorList>
    </citation>
    <scope>NUCLEOTIDE SEQUENCE [LARGE SCALE GENOMIC DNA]</scope>
    <source>
        <strain>ATCC 204508 / S288c</strain>
    </source>
</reference>
<reference key="2">
    <citation type="journal article" date="2014" name="G3 (Bethesda)">
        <title>The reference genome sequence of Saccharomyces cerevisiae: Then and now.</title>
        <authorList>
            <person name="Engel S.R."/>
            <person name="Dietrich F.S."/>
            <person name="Fisk D.G."/>
            <person name="Binkley G."/>
            <person name="Balakrishnan R."/>
            <person name="Costanzo M.C."/>
            <person name="Dwight S.S."/>
            <person name="Hitz B.C."/>
            <person name="Karra K."/>
            <person name="Nash R.S."/>
            <person name="Weng S."/>
            <person name="Wong E.D."/>
            <person name="Lloyd P."/>
            <person name="Skrzypek M.S."/>
            <person name="Miyasato S.R."/>
            <person name="Simison M."/>
            <person name="Cherry J.M."/>
        </authorList>
    </citation>
    <scope>GENOME REANNOTATION</scope>
    <source>
        <strain>ATCC 204508 / S288c</strain>
    </source>
</reference>
<reference key="3">
    <citation type="journal article" date="2006" name="Genes Dev.">
        <title>Systematic identification and functional screens of uncharacterized proteins associated with eukaryotic ribosomal complexes.</title>
        <authorList>
            <person name="Fleischer T.C."/>
            <person name="Weaver C.M."/>
            <person name="McAfee K.J."/>
            <person name="Jennings J.L."/>
            <person name="Link A.J."/>
        </authorList>
    </citation>
    <scope>IDENTIFICATION BY MASS SPECTROMETRY</scope>
</reference>
<gene>
    <name type="ordered locus">YPR096C</name>
    <name type="ORF">P9513.17C</name>
</gene>